<comment type="function">
    <text evidence="4 5 6 7 8">Substrate-binding subunit of the Rab geranylgeranyltransferase (GGTase) complex. Binds unprenylated Rab proteins and presents the substrate peptide to the catalytic component B composed of RABGGTA and RABGGTB, and remains bound to it after the geranylgeranyl transfer reaction. The component A is thought to be regenerated by transferring its prenylated Rab back to the donor membrane. Besides, a pre-formed complex consisting of CHM and the Rab GGTase dimer (RGGT or component B) can bind to and prenylate Rab proteins; this alternative pathway is proposed to be the predominant pathway for Rab protein geranylgeranylation.</text>
</comment>
<comment type="subunit">
    <text evidence="1 3 4 5 6 7 8">Monomer (PubMed:1525821, PubMed:8513495). Heterotrimer composed of RABGGTA, RABGGTB and CHM; within this trimer, RABGGTA and RABGGTB form the catalytic component B, while CHM (component A) mediates Rab protein binding (PubMed:12620235). Can associate with the Rab GGTase dimer (RGGT or component B) prior to Rab protein binding; the association is stabilized by geranylgeranyl pyrophosphate (GGpp). The CHM:RGGT:Rab complex is destabilized by GGpp (By similarity). Interacts with RAB1A, RAB1B, RAB7A and RAB27A and mediates their prenylation (PubMed:11389151, PubMed:12356470, PubMed:15186776, PubMed:8513495). Interacts with RAB5A (By similarity). Interacts with the non-phosphorylated forms of RAB3A, RAB3B, RAB3C, RAB3D, RAB5B, RAB5C RAB8A, RAB8B, RAB10, RAB12, RAB35, and RAB43 (By similarity).</text>
</comment>
<comment type="interaction">
    <interactant intactId="EBI-1039231">
        <id>P37727</id>
    </interactant>
    <interactant intactId="EBI-916225">
        <id>P09527</id>
        <label>Rab7a</label>
    </interactant>
    <organismsDiffer>false</organismsDiffer>
    <experiments>2</experiments>
</comment>
<comment type="subcellular location">
    <subcellularLocation>
        <location evidence="4 7 8">Cytoplasm</location>
        <location evidence="4 7 8">Cytosol</location>
    </subcellularLocation>
</comment>
<comment type="tissue specificity">
    <text>Most abundant in the heart, brain, and spleen. Lower levels seen in the lung, liver, muscle and kidney. Extremely low levels seen in the testis.</text>
</comment>
<comment type="similarity">
    <text evidence="9">Belongs to the Rab GDI family.</text>
</comment>
<keyword id="KW-0002">3D-structure</keyword>
<keyword id="KW-0963">Cytoplasm</keyword>
<keyword id="KW-0903">Direct protein sequencing</keyword>
<keyword id="KW-0343">GTPase activation</keyword>
<keyword id="KW-1185">Reference proteome</keyword>
<name>RAE1_RAT</name>
<proteinExistence type="evidence at protein level"/>
<protein>
    <recommendedName>
        <fullName>Rab proteins geranylgeranyltransferase component A 1</fullName>
    </recommendedName>
    <alternativeName>
        <fullName>Choroideremia protein homolog</fullName>
    </alternativeName>
    <alternativeName>
        <fullName>Rab escort protein 1</fullName>
        <shortName>REP-1</shortName>
    </alternativeName>
</protein>
<accession>P37727</accession>
<dbReference type="EMBL" id="L13722">
    <property type="protein sequence ID" value="AAA87626.1"/>
    <property type="molecule type" value="mRNA"/>
</dbReference>
<dbReference type="PIR" id="A40686">
    <property type="entry name" value="A40686"/>
</dbReference>
<dbReference type="RefSeq" id="NP_058763.1">
    <property type="nucleotide sequence ID" value="NM_017067.1"/>
</dbReference>
<dbReference type="PDB" id="1LTX">
    <property type="method" value="X-ray"/>
    <property type="resolution" value="2.70 A"/>
    <property type="chains" value="R=1-650"/>
</dbReference>
<dbReference type="PDB" id="1VG0">
    <property type="method" value="X-ray"/>
    <property type="resolution" value="2.20 A"/>
    <property type="chains" value="A=1-650"/>
</dbReference>
<dbReference type="PDB" id="1VG9">
    <property type="method" value="X-ray"/>
    <property type="resolution" value="2.50 A"/>
    <property type="chains" value="A/C/E/G=1-650"/>
</dbReference>
<dbReference type="PDBsum" id="1LTX"/>
<dbReference type="PDBsum" id="1VG0"/>
<dbReference type="PDBsum" id="1VG9"/>
<dbReference type="SMR" id="P37727"/>
<dbReference type="FunCoup" id="P37727">
    <property type="interactions" value="1346"/>
</dbReference>
<dbReference type="IntAct" id="P37727">
    <property type="interactions" value="1"/>
</dbReference>
<dbReference type="STRING" id="10116.ENSRNOP00000000174"/>
<dbReference type="iPTMnet" id="P37727"/>
<dbReference type="PhosphoSitePlus" id="P37727"/>
<dbReference type="jPOST" id="P37727"/>
<dbReference type="PaxDb" id="10116-ENSRNOP00000000174"/>
<dbReference type="GeneID" id="24942"/>
<dbReference type="KEGG" id="rno:24942"/>
<dbReference type="UCSC" id="RGD:2340">
    <property type="organism name" value="rat"/>
</dbReference>
<dbReference type="AGR" id="RGD:2340"/>
<dbReference type="CTD" id="1121"/>
<dbReference type="RGD" id="2340">
    <property type="gene designation" value="Chm"/>
</dbReference>
<dbReference type="eggNOG" id="KOG4405">
    <property type="taxonomic scope" value="Eukaryota"/>
</dbReference>
<dbReference type="InParanoid" id="P37727"/>
<dbReference type="OrthoDB" id="82234at9989"/>
<dbReference type="PhylomeDB" id="P37727"/>
<dbReference type="Reactome" id="R-RNO-6803205">
    <property type="pathway name" value="TP53 regulates transcription of several additional cell death genes whose specific roles in p53-dependent apoptosis remain uncertain"/>
</dbReference>
<dbReference type="Reactome" id="R-RNO-8873719">
    <property type="pathway name" value="RAB geranylgeranylation"/>
</dbReference>
<dbReference type="Reactome" id="R-RNO-8876198">
    <property type="pathway name" value="RAB GEFs exchange GTP for GDP on RABs"/>
</dbReference>
<dbReference type="EvolutionaryTrace" id="P37727"/>
<dbReference type="PRO" id="PR:P37727"/>
<dbReference type="Proteomes" id="UP000002494">
    <property type="component" value="Unplaced"/>
</dbReference>
<dbReference type="GO" id="GO:0005829">
    <property type="term" value="C:cytosol"/>
    <property type="evidence" value="ECO:0000250"/>
    <property type="project" value="UniProtKB"/>
</dbReference>
<dbReference type="GO" id="GO:0005634">
    <property type="term" value="C:nucleus"/>
    <property type="evidence" value="ECO:0000318"/>
    <property type="project" value="GO_Central"/>
</dbReference>
<dbReference type="GO" id="GO:0005968">
    <property type="term" value="C:Rab-protein geranylgeranyltransferase complex"/>
    <property type="evidence" value="ECO:0000314"/>
    <property type="project" value="UniProtKB"/>
</dbReference>
<dbReference type="GO" id="GO:0005092">
    <property type="term" value="F:GDP-dissociation inhibitor activity"/>
    <property type="evidence" value="ECO:0007669"/>
    <property type="project" value="InterPro"/>
</dbReference>
<dbReference type="GO" id="GO:0005096">
    <property type="term" value="F:GTPase activator activity"/>
    <property type="evidence" value="ECO:0007669"/>
    <property type="project" value="UniProtKB-KW"/>
</dbReference>
<dbReference type="GO" id="GO:0044877">
    <property type="term" value="F:protein-containing complex binding"/>
    <property type="evidence" value="ECO:0000353"/>
    <property type="project" value="CAFA"/>
</dbReference>
<dbReference type="GO" id="GO:0031267">
    <property type="term" value="F:small GTPase binding"/>
    <property type="evidence" value="ECO:0000314"/>
    <property type="project" value="UniProtKB"/>
</dbReference>
<dbReference type="GO" id="GO:0001568">
    <property type="term" value="P:blood vessel development"/>
    <property type="evidence" value="ECO:0000266"/>
    <property type="project" value="RGD"/>
</dbReference>
<dbReference type="GO" id="GO:0006886">
    <property type="term" value="P:intracellular protein transport"/>
    <property type="evidence" value="ECO:0007669"/>
    <property type="project" value="InterPro"/>
</dbReference>
<dbReference type="GO" id="GO:0018344">
    <property type="term" value="P:protein geranylgeranylation"/>
    <property type="evidence" value="ECO:0000314"/>
    <property type="project" value="UniProtKB"/>
</dbReference>
<dbReference type="GO" id="GO:0006612">
    <property type="term" value="P:protein targeting to membrane"/>
    <property type="evidence" value="ECO:0000250"/>
    <property type="project" value="UniProtKB"/>
</dbReference>
<dbReference type="GO" id="GO:0007264">
    <property type="term" value="P:small GTPase-mediated signal transduction"/>
    <property type="evidence" value="ECO:0007669"/>
    <property type="project" value="InterPro"/>
</dbReference>
<dbReference type="GO" id="GO:0016192">
    <property type="term" value="P:vesicle-mediated transport"/>
    <property type="evidence" value="ECO:0000318"/>
    <property type="project" value="GO_Central"/>
</dbReference>
<dbReference type="DisProt" id="DP00458"/>
<dbReference type="FunFam" id="1.10.405.10:FF:000003">
    <property type="entry name" value="Rab proteins geranylgeranyltransferase component A"/>
    <property type="match status" value="1"/>
</dbReference>
<dbReference type="FunFam" id="3.30.519.10:FF:000007">
    <property type="entry name" value="Rab proteins geranylgeranyltransferase component A"/>
    <property type="match status" value="1"/>
</dbReference>
<dbReference type="FunFam" id="3.50.50.60:FF:000108">
    <property type="entry name" value="Rab proteins geranylgeranyltransferase component A"/>
    <property type="match status" value="1"/>
</dbReference>
<dbReference type="Gene3D" id="3.50.50.60">
    <property type="entry name" value="FAD/NAD(P)-binding domain"/>
    <property type="match status" value="2"/>
</dbReference>
<dbReference type="Gene3D" id="1.10.405.10">
    <property type="entry name" value="Guanine Nucleotide Dissociation Inhibitor, domain 1"/>
    <property type="match status" value="1"/>
</dbReference>
<dbReference type="Gene3D" id="3.30.519.10">
    <property type="entry name" value="Guanine Nucleotide Dissociation Inhibitor, domain 2"/>
    <property type="match status" value="1"/>
</dbReference>
<dbReference type="InterPro" id="IPR036188">
    <property type="entry name" value="FAD/NAD-bd_sf"/>
</dbReference>
<dbReference type="InterPro" id="IPR018203">
    <property type="entry name" value="GDP_dissociation_inhibitor"/>
</dbReference>
<dbReference type="InterPro" id="IPR001738">
    <property type="entry name" value="Rab_escort"/>
</dbReference>
<dbReference type="InterPro" id="IPR054420">
    <property type="entry name" value="RAE1_2_domI_C"/>
</dbReference>
<dbReference type="PANTHER" id="PTHR11787">
    <property type="entry name" value="RAB GDP-DISSOCIATION INHIBITOR"/>
    <property type="match status" value="1"/>
</dbReference>
<dbReference type="PANTHER" id="PTHR11787:SF12">
    <property type="entry name" value="RAB PROTEINS GERANYLGERANYLTRANSFERASE COMPONENT A 1"/>
    <property type="match status" value="1"/>
</dbReference>
<dbReference type="Pfam" id="PF00996">
    <property type="entry name" value="GDI"/>
    <property type="match status" value="1"/>
</dbReference>
<dbReference type="Pfam" id="PF22603">
    <property type="entry name" value="RAE1_2_domI_C"/>
    <property type="match status" value="1"/>
</dbReference>
<dbReference type="PIRSF" id="PIRSF016550">
    <property type="entry name" value="Rab_ger_ger_transf_A_euk"/>
    <property type="match status" value="1"/>
</dbReference>
<dbReference type="PRINTS" id="PR00893">
    <property type="entry name" value="RABESCORT"/>
</dbReference>
<dbReference type="PRINTS" id="PR00891">
    <property type="entry name" value="RABGDIREP"/>
</dbReference>
<dbReference type="SUPFAM" id="SSF54373">
    <property type="entry name" value="FAD-linked reductases, C-terminal domain"/>
    <property type="match status" value="1"/>
</dbReference>
<dbReference type="SUPFAM" id="SSF51905">
    <property type="entry name" value="FAD/NAD(P)-binding domain"/>
    <property type="match status" value="1"/>
</dbReference>
<feature type="chain" id="PRO_0000056688" description="Rab proteins geranylgeranyltransferase component A 1">
    <location>
        <begin position="1"/>
        <end position="650"/>
    </location>
</feature>
<feature type="region of interest" description="Disordered" evidence="2">
    <location>
        <begin position="156"/>
        <end position="208"/>
    </location>
</feature>
<feature type="region of interest" description="Disordered" evidence="2">
    <location>
        <begin position="603"/>
        <end position="650"/>
    </location>
</feature>
<feature type="compositionally biased region" description="Basic and acidic residues" evidence="2">
    <location>
        <begin position="177"/>
        <end position="190"/>
    </location>
</feature>
<feature type="compositionally biased region" description="Polar residues" evidence="2">
    <location>
        <begin position="616"/>
        <end position="634"/>
    </location>
</feature>
<feature type="mutagenesis site" description="Abolishes association with RGGT." evidence="5">
    <original>F</original>
    <variation>A</variation>
    <location>
        <position position="279"/>
    </location>
</feature>
<feature type="strand" evidence="11">
    <location>
        <begin position="10"/>
        <end position="14"/>
    </location>
</feature>
<feature type="helix" evidence="11">
    <location>
        <begin position="18"/>
        <end position="29"/>
    </location>
</feature>
<feature type="strand" evidence="11">
    <location>
        <begin position="34"/>
        <end position="37"/>
    </location>
</feature>
<feature type="strand" evidence="11">
    <location>
        <begin position="39"/>
        <end position="43"/>
    </location>
</feature>
<feature type="helix" evidence="11">
    <location>
        <begin position="45"/>
        <end position="47"/>
    </location>
</feature>
<feature type="helix" evidence="11">
    <location>
        <begin position="52"/>
        <end position="61"/>
    </location>
</feature>
<feature type="helix" evidence="11">
    <location>
        <begin position="75"/>
        <end position="78"/>
    </location>
</feature>
<feature type="strand" evidence="11">
    <location>
        <begin position="83"/>
        <end position="88"/>
    </location>
</feature>
<feature type="strand" evidence="11">
    <location>
        <begin position="95"/>
        <end position="102"/>
    </location>
</feature>
<feature type="helix" evidence="11">
    <location>
        <begin position="214"/>
        <end position="219"/>
    </location>
</feature>
<feature type="helix" evidence="11">
    <location>
        <begin position="221"/>
        <end position="223"/>
    </location>
</feature>
<feature type="strand" evidence="11">
    <location>
        <begin position="226"/>
        <end position="229"/>
    </location>
</feature>
<feature type="strand" evidence="11">
    <location>
        <begin position="233"/>
        <end position="237"/>
    </location>
</feature>
<feature type="helix" evidence="11">
    <location>
        <begin position="238"/>
        <end position="246"/>
    </location>
</feature>
<feature type="helix" evidence="11">
    <location>
        <begin position="248"/>
        <end position="251"/>
    </location>
</feature>
<feature type="strand" evidence="11">
    <location>
        <begin position="254"/>
        <end position="256"/>
    </location>
</feature>
<feature type="strand" evidence="11">
    <location>
        <begin position="259"/>
        <end position="270"/>
    </location>
</feature>
<feature type="helix" evidence="11">
    <location>
        <begin position="275"/>
        <end position="280"/>
    </location>
</feature>
<feature type="strand" evidence="11">
    <location>
        <begin position="282"/>
        <end position="284"/>
    </location>
</feature>
<feature type="helix" evidence="11">
    <location>
        <begin position="286"/>
        <end position="300"/>
    </location>
</feature>
<feature type="helix" evidence="11">
    <location>
        <begin position="301"/>
        <end position="304"/>
    </location>
</feature>
<feature type="helix" evidence="11">
    <location>
        <begin position="306"/>
        <end position="310"/>
    </location>
</feature>
<feature type="turn" evidence="11">
    <location>
        <begin position="311"/>
        <end position="314"/>
    </location>
</feature>
<feature type="helix" evidence="11">
    <location>
        <begin position="317"/>
        <end position="321"/>
    </location>
</feature>
<feature type="strand" evidence="11">
    <location>
        <begin position="324"/>
        <end position="326"/>
    </location>
</feature>
<feature type="helix" evidence="11">
    <location>
        <begin position="328"/>
        <end position="337"/>
    </location>
</feature>
<feature type="strand" evidence="12">
    <location>
        <begin position="343"/>
        <end position="345"/>
    </location>
</feature>
<feature type="helix" evidence="11">
    <location>
        <begin position="348"/>
        <end position="361"/>
    </location>
</feature>
<feature type="strand" evidence="11">
    <location>
        <begin position="364"/>
        <end position="373"/>
    </location>
</feature>
<feature type="helix" evidence="11">
    <location>
        <begin position="379"/>
        <end position="390"/>
    </location>
</feature>
<feature type="strand" evidence="11">
    <location>
        <begin position="394"/>
        <end position="398"/>
    </location>
</feature>
<feature type="strand" evidence="11">
    <location>
        <begin position="401"/>
        <end position="407"/>
    </location>
</feature>
<feature type="turn" evidence="11">
    <location>
        <begin position="408"/>
        <end position="410"/>
    </location>
</feature>
<feature type="strand" evidence="11">
    <location>
        <begin position="413"/>
        <end position="418"/>
    </location>
</feature>
<feature type="strand" evidence="11">
    <location>
        <begin position="423"/>
        <end position="425"/>
    </location>
</feature>
<feature type="strand" evidence="11">
    <location>
        <begin position="427"/>
        <end position="432"/>
    </location>
</feature>
<feature type="helix" evidence="11">
    <location>
        <begin position="433"/>
        <end position="435"/>
    </location>
</feature>
<feature type="turn" evidence="11">
    <location>
        <begin position="438"/>
        <end position="443"/>
    </location>
</feature>
<feature type="strand" evidence="11">
    <location>
        <begin position="447"/>
        <end position="458"/>
    </location>
</feature>
<feature type="strand" evidence="11">
    <location>
        <begin position="470"/>
        <end position="474"/>
    </location>
</feature>
<feature type="strand" evidence="10">
    <location>
        <begin position="478"/>
        <end position="480"/>
    </location>
</feature>
<feature type="strand" evidence="11">
    <location>
        <begin position="484"/>
        <end position="489"/>
    </location>
</feature>
<feature type="helix" evidence="11">
    <location>
        <begin position="491"/>
        <end position="493"/>
    </location>
</feature>
<feature type="strand" evidence="12">
    <location>
        <begin position="494"/>
        <end position="496"/>
    </location>
</feature>
<feature type="strand" evidence="11">
    <location>
        <begin position="501"/>
        <end position="508"/>
    </location>
</feature>
<feature type="helix" evidence="11">
    <location>
        <begin position="513"/>
        <end position="524"/>
    </location>
</feature>
<feature type="strand" evidence="11">
    <location>
        <begin position="542"/>
        <end position="553"/>
    </location>
</feature>
<feature type="helix" evidence="11">
    <location>
        <begin position="559"/>
        <end position="561"/>
    </location>
</feature>
<feature type="strand" evidence="11">
    <location>
        <begin position="562"/>
        <end position="564"/>
    </location>
</feature>
<feature type="strand" evidence="11">
    <location>
        <begin position="569"/>
        <end position="572"/>
    </location>
</feature>
<feature type="strand" evidence="11">
    <location>
        <begin position="577"/>
        <end position="581"/>
    </location>
</feature>
<feature type="helix" evidence="11">
    <location>
        <begin position="582"/>
        <end position="595"/>
    </location>
</feature>
<feature type="strand" evidence="12">
    <location>
        <begin position="596"/>
        <end position="598"/>
    </location>
</feature>
<feature type="strand" evidence="12">
    <location>
        <begin position="610"/>
        <end position="613"/>
    </location>
</feature>
<gene>
    <name type="primary">Chm</name>
    <name type="synonym">Rep1</name>
</gene>
<evidence type="ECO:0000250" key="1">
    <source>
        <dbReference type="UniProtKB" id="P24386"/>
    </source>
</evidence>
<evidence type="ECO:0000256" key="2">
    <source>
        <dbReference type="SAM" id="MobiDB-lite"/>
    </source>
</evidence>
<evidence type="ECO:0000269" key="3">
    <source>
    </source>
</evidence>
<evidence type="ECO:0000269" key="4">
    <source>
    </source>
</evidence>
<evidence type="ECO:0000269" key="5">
    <source>
    </source>
</evidence>
<evidence type="ECO:0000269" key="6">
    <source>
    </source>
</evidence>
<evidence type="ECO:0000269" key="7">
    <source>
    </source>
</evidence>
<evidence type="ECO:0000269" key="8">
    <source>
    </source>
</evidence>
<evidence type="ECO:0000305" key="9"/>
<evidence type="ECO:0007829" key="10">
    <source>
        <dbReference type="PDB" id="1LTX"/>
    </source>
</evidence>
<evidence type="ECO:0007829" key="11">
    <source>
        <dbReference type="PDB" id="1VG0"/>
    </source>
</evidence>
<evidence type="ECO:0007829" key="12">
    <source>
        <dbReference type="PDB" id="1VG9"/>
    </source>
</evidence>
<organism>
    <name type="scientific">Rattus norvegicus</name>
    <name type="common">Rat</name>
    <dbReference type="NCBI Taxonomy" id="10116"/>
    <lineage>
        <taxon>Eukaryota</taxon>
        <taxon>Metazoa</taxon>
        <taxon>Chordata</taxon>
        <taxon>Craniata</taxon>
        <taxon>Vertebrata</taxon>
        <taxon>Euteleostomi</taxon>
        <taxon>Mammalia</taxon>
        <taxon>Eutheria</taxon>
        <taxon>Euarchontoglires</taxon>
        <taxon>Glires</taxon>
        <taxon>Rodentia</taxon>
        <taxon>Myomorpha</taxon>
        <taxon>Muroidea</taxon>
        <taxon>Muridae</taxon>
        <taxon>Murinae</taxon>
        <taxon>Rattus</taxon>
    </lineage>
</organism>
<reference key="1">
    <citation type="journal article" date="1993" name="Cell">
        <title>cDNA cloning of component A of Rab geranylgeranyl transferase and demonstration of its role as a Rab escort protein.</title>
        <authorList>
            <person name="Andres D.A."/>
            <person name="Seabra M.C."/>
            <person name="Brown M.S."/>
            <person name="Armstrong S.A."/>
            <person name="Smeland T.E."/>
            <person name="Cremers F.P.M."/>
            <person name="Goldstein J.L."/>
        </authorList>
    </citation>
    <scope>NUCLEOTIDE SEQUENCE [MRNA]</scope>
    <scope>FUNCTION</scope>
    <scope>SUBUNIT</scope>
    <scope>SUBCELLULAR LOCATION</scope>
    <scope>INTERACTION WITH RAB1A</scope>
    <source>
        <tissue>Brain</tissue>
    </source>
</reference>
<reference key="2">
    <citation type="journal article" date="1992" name="Cell">
        <title>Purification of component A of Rab geranylgeranyl transferase: possible identity with the choroideremia gene product.</title>
        <authorList>
            <person name="Saebra M.C."/>
            <person name="Brown M.S."/>
            <person name="Slaughter C.A."/>
            <person name="Suedhof T.C."/>
            <person name="Goldstein J.L."/>
        </authorList>
    </citation>
    <scope>PARTIAL PROTEIN SEQUENCE</scope>
    <scope>FUNCTION</scope>
    <scope>SUBCELLULAR LOCATION</scope>
    <scope>SUBUNIT</scope>
    <source>
        <tissue>Brain</tissue>
    </source>
</reference>
<reference key="3">
    <citation type="journal article" date="2001" name="J. Biol. Chem.">
        <title>Membrane targeting of a Rab GTPase that fails to associate with Rab escort protein (REP) or guanine nucleotide dissociation inhibitor (GDI).</title>
        <authorList>
            <person name="Overmeyer J.H."/>
            <person name="Wilson A.L."/>
            <person name="Maltese W.A."/>
        </authorList>
    </citation>
    <scope>INTERACTION WITH RAB1B</scope>
</reference>
<reference key="4">
    <citation type="journal article" date="2001" name="J. Biol. Chem.">
        <title>Phosphoisoprenoids modulate association of Rab geranylgeranyltransferase with REP-1.</title>
        <authorList>
            <person name="Thoma N.H."/>
            <person name="Iakovenko A."/>
            <person name="Goody R.S."/>
            <person name="Alexandrov K."/>
        </authorList>
    </citation>
    <scope>SUBUNIT</scope>
</reference>
<reference key="5">
    <citation type="journal article" date="2002" name="Protein Expr. Purif.">
        <title>Expression of mammalian Rab Escort protein-1 and -2 in yeast Saccharomyces cerevisiae.</title>
        <authorList>
            <person name="Sidorovitch V."/>
            <person name="Niculae A."/>
            <person name="Kan N."/>
            <person name="Ceacareanu A.C."/>
            <person name="Alexandrov K."/>
        </authorList>
    </citation>
    <scope>FUNCTION</scope>
    <scope>SUBUNIT</scope>
    <scope>INTERACTION WITH RAB7A</scope>
    <scope>SUBCELLULAR LOCATION</scope>
</reference>
<reference key="6">
    <citation type="journal article" date="2003" name="Mol. Cell">
        <title>Structure of Rab escort protein-1 in complex with Rab geranylgeranyltransferase.</title>
        <authorList>
            <person name="Pylypenko O."/>
            <person name="Rak A."/>
            <person name="Reents R."/>
            <person name="Niculae A."/>
            <person name="Sidorovitch V."/>
            <person name="Cioaca M.D."/>
            <person name="Bessolitsyna E."/>
            <person name="Thomae N.H."/>
            <person name="Waldmann H."/>
            <person name="Schlichting I."/>
            <person name="Goody R.S."/>
            <person name="Alexandrov K."/>
        </authorList>
    </citation>
    <scope>X-RAY CRYSTALLOGRAPHY (2.7 ANGSTROMS) IN COMPLEX WITH RABGGTA AND RABGGTB</scope>
    <scope>MUTAGENESIS OF PHE-279</scope>
    <scope>SUBUNIT</scope>
    <scope>FUNCTION</scope>
</reference>
<reference key="7">
    <citation type="journal article" date="2004" name="Cell">
        <title>Structure of the Rab7:REP-1 complex: insights into the mechanism of Rab prenylation and choroideremia disease.</title>
        <authorList>
            <person name="Rak A."/>
            <person name="Pylypenko O."/>
            <person name="Niculae A."/>
            <person name="Pyatkov K."/>
            <person name="Goody R.S."/>
            <person name="Alexandrov K."/>
        </authorList>
    </citation>
    <scope>X-RAY CRYSTALLOGRAPHY (2.20 ANGSTROMS) IN COMPLEX WITH RAB7A</scope>
    <scope>SUBUNIT</scope>
    <scope>FUNCTION</scope>
    <scope>INTERACTION WITH RAB1A; RAB7A AND RAB27A</scope>
</reference>
<sequence>MADNLPSDFDVIVIGTGLPESIIAAACSRSGQRVLHVDSRSYYGGNWASFSFSGLLSWLKEYQENNDVVTENSMWQEQILENEEAIPLSSKDKTIQHVEVFCYASQDLHKDVEEAGALQKNHASVTSAQSAEAAEAAETSCLPTAVEPLSMGSCEIPAEQSQCPGPESSPEVNDAEATGKKENSDAKSSTEEPSENVPKVQDNTETPKKNRITYSQIIKEGRRFNIDLVSQLLYSRGLLIDLLIKSNVSRYAEFKNITRILAFREGTVEQVPCSRADVFNSKQLTMVEKRMLMKFLTFCVEYEEHPDEYRAYEGTTFSEYLKTQKLTPNLQYFVLHSIAMTSETTSCTVDGLKATKKFLQCLGRYGNTPFLFPLYGQGELPQCFCRMCAVFGGIYCLRHSVQCLVVDKESRKCKAVIDQFGQRIISKHFIIEDSYLSENTCSRVQYRQISRAVLITDGSVLKTDADQQVSILAVPAEEPGSFGVRVIELCSSTMTCMKGTYLVHLTCMSSKTAREDLERVVQKLFTPYTEIEAENEQVEKPRLLWALYFNMRDSSDISRDCYNDLPSNVYVCSGPDSGLGNDNAVKQAETLFQQICPNEDFCPAPPNPEDIVLDGDSSQQEVPESSVTPETNSETPKESTVLGNPEEPSE</sequence>